<accession>B1JHI9</accession>
<gene>
    <name evidence="1" type="primary">folD</name>
    <name type="ordered locus">YPK_3150</name>
</gene>
<proteinExistence type="inferred from homology"/>
<keyword id="KW-0028">Amino-acid biosynthesis</keyword>
<keyword id="KW-0368">Histidine biosynthesis</keyword>
<keyword id="KW-0378">Hydrolase</keyword>
<keyword id="KW-0486">Methionine biosynthesis</keyword>
<keyword id="KW-0511">Multifunctional enzyme</keyword>
<keyword id="KW-0521">NADP</keyword>
<keyword id="KW-0554">One-carbon metabolism</keyword>
<keyword id="KW-0560">Oxidoreductase</keyword>
<keyword id="KW-0658">Purine biosynthesis</keyword>
<name>FOLD_YERPY</name>
<comment type="function">
    <text evidence="1">Catalyzes the oxidation of 5,10-methylenetetrahydrofolate to 5,10-methenyltetrahydrofolate and then the hydrolysis of 5,10-methenyltetrahydrofolate to 10-formyltetrahydrofolate.</text>
</comment>
<comment type="catalytic activity">
    <reaction evidence="1">
        <text>(6R)-5,10-methylene-5,6,7,8-tetrahydrofolate + NADP(+) = (6R)-5,10-methenyltetrahydrofolate + NADPH</text>
        <dbReference type="Rhea" id="RHEA:22812"/>
        <dbReference type="ChEBI" id="CHEBI:15636"/>
        <dbReference type="ChEBI" id="CHEBI:57455"/>
        <dbReference type="ChEBI" id="CHEBI:57783"/>
        <dbReference type="ChEBI" id="CHEBI:58349"/>
        <dbReference type="EC" id="1.5.1.5"/>
    </reaction>
</comment>
<comment type="catalytic activity">
    <reaction evidence="1">
        <text>(6R)-5,10-methenyltetrahydrofolate + H2O = (6R)-10-formyltetrahydrofolate + H(+)</text>
        <dbReference type="Rhea" id="RHEA:23700"/>
        <dbReference type="ChEBI" id="CHEBI:15377"/>
        <dbReference type="ChEBI" id="CHEBI:15378"/>
        <dbReference type="ChEBI" id="CHEBI:57455"/>
        <dbReference type="ChEBI" id="CHEBI:195366"/>
        <dbReference type="EC" id="3.5.4.9"/>
    </reaction>
</comment>
<comment type="pathway">
    <text evidence="1">One-carbon metabolism; tetrahydrofolate interconversion.</text>
</comment>
<comment type="subunit">
    <text evidence="1">Homodimer.</text>
</comment>
<comment type="similarity">
    <text evidence="1">Belongs to the tetrahydrofolate dehydrogenase/cyclohydrolase family.</text>
</comment>
<feature type="chain" id="PRO_1000147541" description="Bifunctional protein FolD">
    <location>
        <begin position="1"/>
        <end position="288"/>
    </location>
</feature>
<feature type="binding site" evidence="1">
    <location>
        <begin position="166"/>
        <end position="168"/>
    </location>
    <ligand>
        <name>NADP(+)</name>
        <dbReference type="ChEBI" id="CHEBI:58349"/>
    </ligand>
</feature>
<feature type="binding site" evidence="1">
    <location>
        <position position="232"/>
    </location>
    <ligand>
        <name>NADP(+)</name>
        <dbReference type="ChEBI" id="CHEBI:58349"/>
    </ligand>
</feature>
<organism>
    <name type="scientific">Yersinia pseudotuberculosis serotype O:3 (strain YPIII)</name>
    <dbReference type="NCBI Taxonomy" id="502800"/>
    <lineage>
        <taxon>Bacteria</taxon>
        <taxon>Pseudomonadati</taxon>
        <taxon>Pseudomonadota</taxon>
        <taxon>Gammaproteobacteria</taxon>
        <taxon>Enterobacterales</taxon>
        <taxon>Yersiniaceae</taxon>
        <taxon>Yersinia</taxon>
    </lineage>
</organism>
<evidence type="ECO:0000255" key="1">
    <source>
        <dbReference type="HAMAP-Rule" id="MF_01576"/>
    </source>
</evidence>
<protein>
    <recommendedName>
        <fullName evidence="1">Bifunctional protein FolD</fullName>
    </recommendedName>
    <domain>
        <recommendedName>
            <fullName evidence="1">Methylenetetrahydrofolate dehydrogenase</fullName>
            <ecNumber evidence="1">1.5.1.5</ecNumber>
        </recommendedName>
    </domain>
    <domain>
        <recommendedName>
            <fullName evidence="1">Methenyltetrahydrofolate cyclohydrolase</fullName>
            <ecNumber evidence="1">3.5.4.9</ecNumber>
        </recommendedName>
    </domain>
</protein>
<dbReference type="EC" id="1.5.1.5" evidence="1"/>
<dbReference type="EC" id="3.5.4.9" evidence="1"/>
<dbReference type="EMBL" id="CP000950">
    <property type="protein sequence ID" value="ACA69421.1"/>
    <property type="molecule type" value="Genomic_DNA"/>
</dbReference>
<dbReference type="RefSeq" id="WP_002209774.1">
    <property type="nucleotide sequence ID" value="NZ_CP009792.1"/>
</dbReference>
<dbReference type="SMR" id="B1JHI9"/>
<dbReference type="GeneID" id="57975784"/>
<dbReference type="KEGG" id="ypy:YPK_3150"/>
<dbReference type="PATRIC" id="fig|502800.11.peg.3877"/>
<dbReference type="UniPathway" id="UPA00193"/>
<dbReference type="GO" id="GO:0005829">
    <property type="term" value="C:cytosol"/>
    <property type="evidence" value="ECO:0007669"/>
    <property type="project" value="TreeGrafter"/>
</dbReference>
<dbReference type="GO" id="GO:0004477">
    <property type="term" value="F:methenyltetrahydrofolate cyclohydrolase activity"/>
    <property type="evidence" value="ECO:0007669"/>
    <property type="project" value="UniProtKB-UniRule"/>
</dbReference>
<dbReference type="GO" id="GO:0004488">
    <property type="term" value="F:methylenetetrahydrofolate dehydrogenase (NADP+) activity"/>
    <property type="evidence" value="ECO:0007669"/>
    <property type="project" value="UniProtKB-UniRule"/>
</dbReference>
<dbReference type="GO" id="GO:0000105">
    <property type="term" value="P:L-histidine biosynthetic process"/>
    <property type="evidence" value="ECO:0007669"/>
    <property type="project" value="UniProtKB-KW"/>
</dbReference>
<dbReference type="GO" id="GO:0009086">
    <property type="term" value="P:methionine biosynthetic process"/>
    <property type="evidence" value="ECO:0007669"/>
    <property type="project" value="UniProtKB-KW"/>
</dbReference>
<dbReference type="GO" id="GO:0006164">
    <property type="term" value="P:purine nucleotide biosynthetic process"/>
    <property type="evidence" value="ECO:0007669"/>
    <property type="project" value="UniProtKB-KW"/>
</dbReference>
<dbReference type="GO" id="GO:0035999">
    <property type="term" value="P:tetrahydrofolate interconversion"/>
    <property type="evidence" value="ECO:0007669"/>
    <property type="project" value="UniProtKB-UniRule"/>
</dbReference>
<dbReference type="CDD" id="cd01080">
    <property type="entry name" value="NAD_bind_m-THF_DH_Cyclohyd"/>
    <property type="match status" value="1"/>
</dbReference>
<dbReference type="FunFam" id="3.40.50.10860:FF:000001">
    <property type="entry name" value="Bifunctional protein FolD"/>
    <property type="match status" value="1"/>
</dbReference>
<dbReference type="FunFam" id="3.40.50.720:FF:000006">
    <property type="entry name" value="Bifunctional protein FolD"/>
    <property type="match status" value="1"/>
</dbReference>
<dbReference type="Gene3D" id="3.40.50.10860">
    <property type="entry name" value="Leucine Dehydrogenase, chain A, domain 1"/>
    <property type="match status" value="1"/>
</dbReference>
<dbReference type="Gene3D" id="3.40.50.720">
    <property type="entry name" value="NAD(P)-binding Rossmann-like Domain"/>
    <property type="match status" value="1"/>
</dbReference>
<dbReference type="HAMAP" id="MF_01576">
    <property type="entry name" value="THF_DHG_CYH"/>
    <property type="match status" value="1"/>
</dbReference>
<dbReference type="InterPro" id="IPR046346">
    <property type="entry name" value="Aminoacid_DH-like_N_sf"/>
</dbReference>
<dbReference type="InterPro" id="IPR036291">
    <property type="entry name" value="NAD(P)-bd_dom_sf"/>
</dbReference>
<dbReference type="InterPro" id="IPR000672">
    <property type="entry name" value="THF_DH/CycHdrlase"/>
</dbReference>
<dbReference type="InterPro" id="IPR020630">
    <property type="entry name" value="THF_DH/CycHdrlase_cat_dom"/>
</dbReference>
<dbReference type="InterPro" id="IPR020867">
    <property type="entry name" value="THF_DH/CycHdrlase_CS"/>
</dbReference>
<dbReference type="InterPro" id="IPR020631">
    <property type="entry name" value="THF_DH/CycHdrlase_NAD-bd_dom"/>
</dbReference>
<dbReference type="NCBIfam" id="NF008058">
    <property type="entry name" value="PRK10792.1"/>
    <property type="match status" value="1"/>
</dbReference>
<dbReference type="NCBIfam" id="NF010783">
    <property type="entry name" value="PRK14186.1"/>
    <property type="match status" value="1"/>
</dbReference>
<dbReference type="PANTHER" id="PTHR48099:SF5">
    <property type="entry name" value="C-1-TETRAHYDROFOLATE SYNTHASE, CYTOPLASMIC"/>
    <property type="match status" value="1"/>
</dbReference>
<dbReference type="PANTHER" id="PTHR48099">
    <property type="entry name" value="C-1-TETRAHYDROFOLATE SYNTHASE, CYTOPLASMIC-RELATED"/>
    <property type="match status" value="1"/>
</dbReference>
<dbReference type="Pfam" id="PF00763">
    <property type="entry name" value="THF_DHG_CYH"/>
    <property type="match status" value="1"/>
</dbReference>
<dbReference type="Pfam" id="PF02882">
    <property type="entry name" value="THF_DHG_CYH_C"/>
    <property type="match status" value="1"/>
</dbReference>
<dbReference type="PRINTS" id="PR00085">
    <property type="entry name" value="THFDHDRGNASE"/>
</dbReference>
<dbReference type="SUPFAM" id="SSF53223">
    <property type="entry name" value="Aminoacid dehydrogenase-like, N-terminal domain"/>
    <property type="match status" value="1"/>
</dbReference>
<dbReference type="SUPFAM" id="SSF51735">
    <property type="entry name" value="NAD(P)-binding Rossmann-fold domains"/>
    <property type="match status" value="1"/>
</dbReference>
<dbReference type="PROSITE" id="PS00766">
    <property type="entry name" value="THF_DHG_CYH_1"/>
    <property type="match status" value="1"/>
</dbReference>
<dbReference type="PROSITE" id="PS00767">
    <property type="entry name" value="THF_DHG_CYH_2"/>
    <property type="match status" value="1"/>
</dbReference>
<reference key="1">
    <citation type="submission" date="2008-02" db="EMBL/GenBank/DDBJ databases">
        <title>Complete sequence of Yersinia pseudotuberculosis YPIII.</title>
        <authorList>
            <consortium name="US DOE Joint Genome Institute"/>
            <person name="Copeland A."/>
            <person name="Lucas S."/>
            <person name="Lapidus A."/>
            <person name="Glavina del Rio T."/>
            <person name="Dalin E."/>
            <person name="Tice H."/>
            <person name="Bruce D."/>
            <person name="Goodwin L."/>
            <person name="Pitluck S."/>
            <person name="Munk A.C."/>
            <person name="Brettin T."/>
            <person name="Detter J.C."/>
            <person name="Han C."/>
            <person name="Tapia R."/>
            <person name="Schmutz J."/>
            <person name="Larimer F."/>
            <person name="Land M."/>
            <person name="Hauser L."/>
            <person name="Challacombe J.F."/>
            <person name="Green L."/>
            <person name="Lindler L.E."/>
            <person name="Nikolich M.P."/>
            <person name="Richardson P."/>
        </authorList>
    </citation>
    <scope>NUCLEOTIDE SEQUENCE [LARGE SCALE GENOMIC DNA]</scope>
    <source>
        <strain>YPIII</strain>
    </source>
</reference>
<sequence length="288" mass="30983">MSAKIIDGKTIAQQVRNEVAAVVQQRLAAGKRAPGLAVVLVGENPASQIYVASKRKACEEVGFVSRSYDLPMATSEAELLALIDSLNEDTEIDGILIQLPLPNGIDNVKVLERIHPDKDVDGFHPYNVGRLCQRAPKLRACTPRGIMTLLERYDIPTYGLNAVVVGASNIVGRPMSLELLLAGCTTTVTHRFTKNLRHHIENADLLVVAVGKPGFIPGEWIKPGAIVIDVGINRLESGKVVGDVAFDVAAERAGWITPVPGGVGPMTVATLIQNTLQACEEYHDISQN</sequence>